<gene>
    <name evidence="1" type="primary">ureF</name>
    <name type="ordered locus">P9215_09201</name>
</gene>
<keyword id="KW-0143">Chaperone</keyword>
<keyword id="KW-0963">Cytoplasm</keyword>
<keyword id="KW-0996">Nickel insertion</keyword>
<dbReference type="EMBL" id="CP000825">
    <property type="protein sequence ID" value="ABV50535.1"/>
    <property type="molecule type" value="Genomic_DNA"/>
</dbReference>
<dbReference type="RefSeq" id="WP_012007631.1">
    <property type="nucleotide sequence ID" value="NC_009840.1"/>
</dbReference>
<dbReference type="SMR" id="A8G4K4"/>
<dbReference type="STRING" id="93060.P9215_09201"/>
<dbReference type="KEGG" id="pmh:P9215_09201"/>
<dbReference type="eggNOG" id="COG0830">
    <property type="taxonomic scope" value="Bacteria"/>
</dbReference>
<dbReference type="HOGENOM" id="CLU_049215_2_1_3"/>
<dbReference type="OrthoDB" id="9798772at2"/>
<dbReference type="Proteomes" id="UP000002014">
    <property type="component" value="Chromosome"/>
</dbReference>
<dbReference type="GO" id="GO:0005737">
    <property type="term" value="C:cytoplasm"/>
    <property type="evidence" value="ECO:0007669"/>
    <property type="project" value="UniProtKB-SubCell"/>
</dbReference>
<dbReference type="GO" id="GO:0016151">
    <property type="term" value="F:nickel cation binding"/>
    <property type="evidence" value="ECO:0007669"/>
    <property type="project" value="UniProtKB-UniRule"/>
</dbReference>
<dbReference type="Gene3D" id="1.10.4190.10">
    <property type="entry name" value="Urease accessory protein UreF"/>
    <property type="match status" value="1"/>
</dbReference>
<dbReference type="HAMAP" id="MF_01385">
    <property type="entry name" value="UreF"/>
    <property type="match status" value="1"/>
</dbReference>
<dbReference type="InterPro" id="IPR002639">
    <property type="entry name" value="UreF"/>
</dbReference>
<dbReference type="InterPro" id="IPR038277">
    <property type="entry name" value="UreF_sf"/>
</dbReference>
<dbReference type="PANTHER" id="PTHR33620">
    <property type="entry name" value="UREASE ACCESSORY PROTEIN F"/>
    <property type="match status" value="1"/>
</dbReference>
<dbReference type="PANTHER" id="PTHR33620:SF1">
    <property type="entry name" value="UREASE ACCESSORY PROTEIN F"/>
    <property type="match status" value="1"/>
</dbReference>
<dbReference type="Pfam" id="PF01730">
    <property type="entry name" value="UreF"/>
    <property type="match status" value="1"/>
</dbReference>
<dbReference type="PIRSF" id="PIRSF009467">
    <property type="entry name" value="Ureas_acces_UreF"/>
    <property type="match status" value="1"/>
</dbReference>
<proteinExistence type="inferred from homology"/>
<reference key="1">
    <citation type="journal article" date="2007" name="PLoS Genet.">
        <title>Patterns and implications of gene gain and loss in the evolution of Prochlorococcus.</title>
        <authorList>
            <person name="Kettler G.C."/>
            <person name="Martiny A.C."/>
            <person name="Huang K."/>
            <person name="Zucker J."/>
            <person name="Coleman M.L."/>
            <person name="Rodrigue S."/>
            <person name="Chen F."/>
            <person name="Lapidus A."/>
            <person name="Ferriera S."/>
            <person name="Johnson J."/>
            <person name="Steglich C."/>
            <person name="Church G.M."/>
            <person name="Richardson P."/>
            <person name="Chisholm S.W."/>
        </authorList>
    </citation>
    <scope>NUCLEOTIDE SEQUENCE [LARGE SCALE GENOMIC DNA]</scope>
    <source>
        <strain>MIT 9215</strain>
    </source>
</reference>
<comment type="function">
    <text evidence="1">Required for maturation of urease via the functional incorporation of the urease nickel metallocenter.</text>
</comment>
<comment type="subunit">
    <text evidence="1">UreD, UreF and UreG form a complex that acts as a GTP-hydrolysis-dependent molecular chaperone, activating the urease apoprotein by helping to assemble the nickel containing metallocenter of UreC. The UreE protein probably delivers the nickel.</text>
</comment>
<comment type="subcellular location">
    <subcellularLocation>
        <location evidence="1">Cytoplasm</location>
    </subcellularLocation>
</comment>
<comment type="similarity">
    <text evidence="1">Belongs to the UreF family.</text>
</comment>
<feature type="chain" id="PRO_1000145129" description="Urease accessory protein UreF">
    <location>
        <begin position="1"/>
        <end position="228"/>
    </location>
</feature>
<evidence type="ECO:0000255" key="1">
    <source>
        <dbReference type="HAMAP-Rule" id="MF_01385"/>
    </source>
</evidence>
<protein>
    <recommendedName>
        <fullName evidence="1">Urease accessory protein UreF</fullName>
    </recommendedName>
</protein>
<organism>
    <name type="scientific">Prochlorococcus marinus (strain MIT 9215)</name>
    <dbReference type="NCBI Taxonomy" id="93060"/>
    <lineage>
        <taxon>Bacteria</taxon>
        <taxon>Bacillati</taxon>
        <taxon>Cyanobacteriota</taxon>
        <taxon>Cyanophyceae</taxon>
        <taxon>Synechococcales</taxon>
        <taxon>Prochlorococcaceae</taxon>
        <taxon>Prochlorococcus</taxon>
    </lineage>
</organism>
<sequence length="228" mass="26563">MSKSHLLKYLLISPNLPVGGFCYSEGLESYLNTKDLKDSNSVKELIISELKIGQIRLDARLLLDFFDIFNELNEDKNFKNNLQKLLSLDKWILSSKDSVEMRAQQIQMANSLFDLNKEFGFEYLYKKNKKNSWPLAWSWSCYCFEITKLEMVETFLYAWSANQLSAALRIIPIGSTKAQLIQRDLLEIISKVSREIMDKEIDDIYFGNVGLAMAQQNHNELYTKLFRN</sequence>
<name>UREF_PROM2</name>
<accession>A8G4K4</accession>